<name>RL29_THEVO</name>
<keyword id="KW-0687">Ribonucleoprotein</keyword>
<keyword id="KW-0689">Ribosomal protein</keyword>
<gene>
    <name evidence="1" type="primary">rpl29</name>
    <name type="ordered locus">TV0335</name>
    <name type="ORF">TVG0336649</name>
</gene>
<comment type="similarity">
    <text evidence="1">Belongs to the universal ribosomal protein uL29 family.</text>
</comment>
<proteinExistence type="inferred from homology"/>
<organism>
    <name type="scientific">Thermoplasma volcanium (strain ATCC 51530 / DSM 4299 / JCM 9571 / NBRC 15438 / GSS1)</name>
    <dbReference type="NCBI Taxonomy" id="273116"/>
    <lineage>
        <taxon>Archaea</taxon>
        <taxon>Methanobacteriati</taxon>
        <taxon>Thermoplasmatota</taxon>
        <taxon>Thermoplasmata</taxon>
        <taxon>Thermoplasmatales</taxon>
        <taxon>Thermoplasmataceae</taxon>
        <taxon>Thermoplasma</taxon>
    </lineage>
</organism>
<feature type="chain" id="PRO_0000130527" description="Large ribosomal subunit protein uL29">
    <location>
        <begin position="1"/>
        <end position="66"/>
    </location>
</feature>
<dbReference type="EMBL" id="BA000011">
    <property type="protein sequence ID" value="BAB59477.1"/>
    <property type="molecule type" value="Genomic_DNA"/>
</dbReference>
<dbReference type="SMR" id="Q97BX0"/>
<dbReference type="STRING" id="273116.gene:9381112"/>
<dbReference type="PaxDb" id="273116-14324550"/>
<dbReference type="KEGG" id="tvo:TVG0336649"/>
<dbReference type="eggNOG" id="arCOG00785">
    <property type="taxonomic scope" value="Archaea"/>
</dbReference>
<dbReference type="HOGENOM" id="CLU_158491_2_2_2"/>
<dbReference type="OrthoDB" id="11736at2157"/>
<dbReference type="PhylomeDB" id="Q97BX0"/>
<dbReference type="Proteomes" id="UP000001017">
    <property type="component" value="Chromosome"/>
</dbReference>
<dbReference type="GO" id="GO:1990904">
    <property type="term" value="C:ribonucleoprotein complex"/>
    <property type="evidence" value="ECO:0007669"/>
    <property type="project" value="UniProtKB-KW"/>
</dbReference>
<dbReference type="GO" id="GO:0005840">
    <property type="term" value="C:ribosome"/>
    <property type="evidence" value="ECO:0007669"/>
    <property type="project" value="UniProtKB-KW"/>
</dbReference>
<dbReference type="GO" id="GO:0003735">
    <property type="term" value="F:structural constituent of ribosome"/>
    <property type="evidence" value="ECO:0007669"/>
    <property type="project" value="InterPro"/>
</dbReference>
<dbReference type="GO" id="GO:0006412">
    <property type="term" value="P:translation"/>
    <property type="evidence" value="ECO:0007669"/>
    <property type="project" value="UniProtKB-UniRule"/>
</dbReference>
<dbReference type="CDD" id="cd00427">
    <property type="entry name" value="Ribosomal_L29_HIP"/>
    <property type="match status" value="1"/>
</dbReference>
<dbReference type="Gene3D" id="1.10.287.310">
    <property type="match status" value="1"/>
</dbReference>
<dbReference type="HAMAP" id="MF_00374">
    <property type="entry name" value="Ribosomal_uL29"/>
    <property type="match status" value="1"/>
</dbReference>
<dbReference type="InterPro" id="IPR001854">
    <property type="entry name" value="Ribosomal_uL29"/>
</dbReference>
<dbReference type="InterPro" id="IPR018254">
    <property type="entry name" value="Ribosomal_uL29_CS"/>
</dbReference>
<dbReference type="InterPro" id="IPR036049">
    <property type="entry name" value="Ribosomal_uL29_sf"/>
</dbReference>
<dbReference type="NCBIfam" id="TIGR00012">
    <property type="entry name" value="L29"/>
    <property type="match status" value="1"/>
</dbReference>
<dbReference type="Pfam" id="PF00831">
    <property type="entry name" value="Ribosomal_L29"/>
    <property type="match status" value="1"/>
</dbReference>
<dbReference type="SUPFAM" id="SSF46561">
    <property type="entry name" value="Ribosomal protein L29 (L29p)"/>
    <property type="match status" value="1"/>
</dbReference>
<dbReference type="PROSITE" id="PS00579">
    <property type="entry name" value="RIBOSOMAL_L29"/>
    <property type="match status" value="1"/>
</dbReference>
<sequence length="66" mass="7685">MLELRAKQIRQMSKEERQQTLKNLKESLLHERALVSMGGSSPSPGKVRSIRRQIARLLTVEREEKK</sequence>
<accession>Q97BX0</accession>
<evidence type="ECO:0000255" key="1">
    <source>
        <dbReference type="HAMAP-Rule" id="MF_00374"/>
    </source>
</evidence>
<evidence type="ECO:0000305" key="2"/>
<protein>
    <recommendedName>
        <fullName evidence="1">Large ribosomal subunit protein uL29</fullName>
    </recommendedName>
    <alternativeName>
        <fullName evidence="2">50S ribosomal protein L29</fullName>
    </alternativeName>
</protein>
<reference key="1">
    <citation type="journal article" date="2000" name="Proc. Natl. Acad. Sci. U.S.A.">
        <title>Archaeal adaptation to higher temperatures revealed by genomic sequence of Thermoplasma volcanium.</title>
        <authorList>
            <person name="Kawashima T."/>
            <person name="Amano N."/>
            <person name="Koike H."/>
            <person name="Makino S."/>
            <person name="Higuchi S."/>
            <person name="Kawashima-Ohya Y."/>
            <person name="Watanabe K."/>
            <person name="Yamazaki M."/>
            <person name="Kanehori K."/>
            <person name="Kawamoto T."/>
            <person name="Nunoshiba T."/>
            <person name="Yamamoto Y."/>
            <person name="Aramaki H."/>
            <person name="Makino K."/>
            <person name="Suzuki M."/>
        </authorList>
    </citation>
    <scope>NUCLEOTIDE SEQUENCE [LARGE SCALE GENOMIC DNA]</scope>
    <source>
        <strain>ATCC 51530 / DSM 4299 / JCM 9571 / NBRC 15438 / GSS1</strain>
    </source>
</reference>